<reference key="1">
    <citation type="journal article" date="2004" name="Science">
        <title>The 1.2-megabase genome sequence of Mimivirus.</title>
        <authorList>
            <person name="Raoult D."/>
            <person name="Audic S."/>
            <person name="Robert C."/>
            <person name="Abergel C."/>
            <person name="Renesto P."/>
            <person name="Ogata H."/>
            <person name="La Scola B."/>
            <person name="Susan M."/>
            <person name="Claverie J.-M."/>
        </authorList>
    </citation>
    <scope>NUCLEOTIDE SEQUENCE [LARGE SCALE GENOMIC DNA]</scope>
    <source>
        <strain>Rowbotham-Bradford</strain>
    </source>
</reference>
<reference key="2">
    <citation type="journal article" date="2006" name="J. Virol.">
        <title>Mimivirus giant particles incorporate a large fraction of anonymous and unique gene products.</title>
        <authorList>
            <person name="Renesto P."/>
            <person name="Abergel C."/>
            <person name="Decloquement P."/>
            <person name="Moinier D."/>
            <person name="Azza S."/>
            <person name="Ogata H."/>
            <person name="Fourquet P."/>
            <person name="Gorvel J.-P."/>
            <person name="Claverie J.-M."/>
            <person name="Raoult D."/>
        </authorList>
    </citation>
    <scope>IDENTIFICATION BY MASS SPECTROMETRY [LARGE SCALE ANALYSIS]</scope>
    <scope>SUBCELLULAR LOCATION</scope>
</reference>
<comment type="subcellular location">
    <subcellularLocation>
        <location evidence="2">Virion</location>
    </subcellularLocation>
</comment>
<organism>
    <name type="scientific">Acanthamoeba polyphaga mimivirus</name>
    <name type="common">APMV</name>
    <dbReference type="NCBI Taxonomy" id="212035"/>
    <lineage>
        <taxon>Viruses</taxon>
        <taxon>Varidnaviria</taxon>
        <taxon>Bamfordvirae</taxon>
        <taxon>Nucleocytoviricota</taxon>
        <taxon>Megaviricetes</taxon>
        <taxon>Imitervirales</taxon>
        <taxon>Mimiviridae</taxon>
        <taxon>Megamimivirinae</taxon>
        <taxon>Mimivirus</taxon>
        <taxon>Mimivirus bradfordmassiliense</taxon>
    </lineage>
</organism>
<feature type="chain" id="PRO_0000244056" description="Uncharacterized protein R727">
    <location>
        <begin position="1"/>
        <end position="284"/>
    </location>
</feature>
<feature type="region of interest" description="Disordered" evidence="1">
    <location>
        <begin position="110"/>
        <end position="176"/>
    </location>
</feature>
<feature type="compositionally biased region" description="Low complexity" evidence="1">
    <location>
        <begin position="110"/>
        <end position="123"/>
    </location>
</feature>
<feature type="compositionally biased region" description="Low complexity" evidence="1">
    <location>
        <begin position="130"/>
        <end position="149"/>
    </location>
</feature>
<keyword id="KW-1185">Reference proteome</keyword>
<keyword id="KW-0946">Virion</keyword>
<evidence type="ECO:0000256" key="1">
    <source>
        <dbReference type="SAM" id="MobiDB-lite"/>
    </source>
</evidence>
<evidence type="ECO:0000269" key="2">
    <source>
    </source>
</evidence>
<organismHost>
    <name type="scientific">Acanthamoeba polyphaga</name>
    <name type="common">Amoeba</name>
    <dbReference type="NCBI Taxonomy" id="5757"/>
</organismHost>
<proteinExistence type="evidence at protein level"/>
<sequence length="284" mass="31884">MNNMDYDPRSMGSYGPNYNNFNPNFGKIRRHKNTSYPGYNGFDPSDGPMNGPMGGPMGGPMNGPMNGQMGGPMNGSMNGPMNGPMNGPMNGQMGGPMNGPMGGPINGPMNGPRGRQMNGPNNGPMGGPMNGPMNGPNNNQFNGPMNGPNEYYSPEDSDGSDYSDSNPNEFDSDDDDIDLSYFQKRQYDKPTYHKFEVTDEYLADYLLRKFGLDKDKVVRSIQKNKKDEFKAMILNYFYKENPKIKHQSINNQYKLFRKWNKSGLKIKIDDLETYYENKVKPHMH</sequence>
<name>YR727_MIMIV</name>
<dbReference type="EMBL" id="AY653733">
    <property type="protein sequence ID" value="AAV50987.1"/>
    <property type="molecule type" value="Genomic_DNA"/>
</dbReference>
<dbReference type="KEGG" id="vg:9925381"/>
<dbReference type="OrthoDB" id="28447at10239"/>
<dbReference type="Proteomes" id="UP000001134">
    <property type="component" value="Genome"/>
</dbReference>
<dbReference type="GO" id="GO:0044423">
    <property type="term" value="C:virion component"/>
    <property type="evidence" value="ECO:0007669"/>
    <property type="project" value="UniProtKB-KW"/>
</dbReference>
<dbReference type="PANTHER" id="PTHR36489:SF1">
    <property type="entry name" value="G-PROTEIN COUPLED RECEPTORS FAMILY 1 PROFILE DOMAIN-CONTAINING PROTEIN"/>
    <property type="match status" value="1"/>
</dbReference>
<dbReference type="PANTHER" id="PTHR36489">
    <property type="entry name" value="PROTEIN-COUPLED RECEPTOR GPR1, PUTATIVE-RELATED"/>
    <property type="match status" value="1"/>
</dbReference>
<protein>
    <recommendedName>
        <fullName>Uncharacterized protein R727</fullName>
    </recommendedName>
</protein>
<accession>Q5UNY5</accession>
<gene>
    <name type="ordered locus">MIMI_R727</name>
</gene>